<organism>
    <name type="scientific">Vibrio vulnificus (strain CMCP6)</name>
    <dbReference type="NCBI Taxonomy" id="216895"/>
    <lineage>
        <taxon>Bacteria</taxon>
        <taxon>Pseudomonadati</taxon>
        <taxon>Pseudomonadota</taxon>
        <taxon>Gammaproteobacteria</taxon>
        <taxon>Vibrionales</taxon>
        <taxon>Vibrionaceae</taxon>
        <taxon>Vibrio</taxon>
    </lineage>
</organism>
<dbReference type="EC" id="6.3.4.5" evidence="1"/>
<dbReference type="EMBL" id="AE016795">
    <property type="protein sequence ID" value="AAO09822.2"/>
    <property type="molecule type" value="Genomic_DNA"/>
</dbReference>
<dbReference type="RefSeq" id="WP_011079347.1">
    <property type="nucleotide sequence ID" value="NC_004459.3"/>
</dbReference>
<dbReference type="SMR" id="Q8DCN0"/>
<dbReference type="KEGG" id="vvu:VV1_1373"/>
<dbReference type="HOGENOM" id="CLU_032784_4_2_6"/>
<dbReference type="UniPathway" id="UPA00068">
    <property type="reaction ID" value="UER00113"/>
</dbReference>
<dbReference type="Proteomes" id="UP000002275">
    <property type="component" value="Chromosome 1"/>
</dbReference>
<dbReference type="GO" id="GO:0005737">
    <property type="term" value="C:cytoplasm"/>
    <property type="evidence" value="ECO:0007669"/>
    <property type="project" value="UniProtKB-SubCell"/>
</dbReference>
<dbReference type="GO" id="GO:0004055">
    <property type="term" value="F:argininosuccinate synthase activity"/>
    <property type="evidence" value="ECO:0007669"/>
    <property type="project" value="UniProtKB-UniRule"/>
</dbReference>
<dbReference type="GO" id="GO:0005524">
    <property type="term" value="F:ATP binding"/>
    <property type="evidence" value="ECO:0007669"/>
    <property type="project" value="UniProtKB-UniRule"/>
</dbReference>
<dbReference type="GO" id="GO:0000053">
    <property type="term" value="P:argininosuccinate metabolic process"/>
    <property type="evidence" value="ECO:0007669"/>
    <property type="project" value="TreeGrafter"/>
</dbReference>
<dbReference type="GO" id="GO:0006526">
    <property type="term" value="P:L-arginine biosynthetic process"/>
    <property type="evidence" value="ECO:0007669"/>
    <property type="project" value="UniProtKB-UniRule"/>
</dbReference>
<dbReference type="GO" id="GO:0000050">
    <property type="term" value="P:urea cycle"/>
    <property type="evidence" value="ECO:0007669"/>
    <property type="project" value="TreeGrafter"/>
</dbReference>
<dbReference type="CDD" id="cd01999">
    <property type="entry name" value="ASS"/>
    <property type="match status" value="1"/>
</dbReference>
<dbReference type="FunFam" id="3.40.50.620:FF:000019">
    <property type="entry name" value="Argininosuccinate synthase"/>
    <property type="match status" value="1"/>
</dbReference>
<dbReference type="FunFam" id="3.90.1260.10:FF:000007">
    <property type="entry name" value="Argininosuccinate synthase"/>
    <property type="match status" value="1"/>
</dbReference>
<dbReference type="Gene3D" id="3.90.1260.10">
    <property type="entry name" value="Argininosuccinate synthetase, chain A, domain 2"/>
    <property type="match status" value="1"/>
</dbReference>
<dbReference type="Gene3D" id="3.40.50.620">
    <property type="entry name" value="HUPs"/>
    <property type="match status" value="1"/>
</dbReference>
<dbReference type="Gene3D" id="1.20.5.470">
    <property type="entry name" value="Single helix bin"/>
    <property type="match status" value="1"/>
</dbReference>
<dbReference type="HAMAP" id="MF_00005">
    <property type="entry name" value="Arg_succ_synth_type1"/>
    <property type="match status" value="1"/>
</dbReference>
<dbReference type="InterPro" id="IPR048268">
    <property type="entry name" value="Arginosuc_syn_C"/>
</dbReference>
<dbReference type="InterPro" id="IPR048267">
    <property type="entry name" value="Arginosuc_syn_N"/>
</dbReference>
<dbReference type="InterPro" id="IPR001518">
    <property type="entry name" value="Arginosuc_synth"/>
</dbReference>
<dbReference type="InterPro" id="IPR018223">
    <property type="entry name" value="Arginosuc_synth_CS"/>
</dbReference>
<dbReference type="InterPro" id="IPR023434">
    <property type="entry name" value="Arginosuc_synth_type_1_subfam"/>
</dbReference>
<dbReference type="InterPro" id="IPR024074">
    <property type="entry name" value="AS_cat/multimer_dom_body"/>
</dbReference>
<dbReference type="InterPro" id="IPR014729">
    <property type="entry name" value="Rossmann-like_a/b/a_fold"/>
</dbReference>
<dbReference type="NCBIfam" id="TIGR00032">
    <property type="entry name" value="argG"/>
    <property type="match status" value="1"/>
</dbReference>
<dbReference type="NCBIfam" id="NF001770">
    <property type="entry name" value="PRK00509.1"/>
    <property type="match status" value="1"/>
</dbReference>
<dbReference type="PANTHER" id="PTHR11587">
    <property type="entry name" value="ARGININOSUCCINATE SYNTHASE"/>
    <property type="match status" value="1"/>
</dbReference>
<dbReference type="PANTHER" id="PTHR11587:SF2">
    <property type="entry name" value="ARGININOSUCCINATE SYNTHASE"/>
    <property type="match status" value="1"/>
</dbReference>
<dbReference type="Pfam" id="PF20979">
    <property type="entry name" value="Arginosuc_syn_C"/>
    <property type="match status" value="1"/>
</dbReference>
<dbReference type="Pfam" id="PF00764">
    <property type="entry name" value="Arginosuc_synth"/>
    <property type="match status" value="1"/>
</dbReference>
<dbReference type="SUPFAM" id="SSF52402">
    <property type="entry name" value="Adenine nucleotide alpha hydrolases-like"/>
    <property type="match status" value="1"/>
</dbReference>
<dbReference type="SUPFAM" id="SSF69864">
    <property type="entry name" value="Argininosuccinate synthetase, C-terminal domain"/>
    <property type="match status" value="1"/>
</dbReference>
<dbReference type="PROSITE" id="PS00564">
    <property type="entry name" value="ARGININOSUCCIN_SYN_1"/>
    <property type="match status" value="1"/>
</dbReference>
<dbReference type="PROSITE" id="PS00565">
    <property type="entry name" value="ARGININOSUCCIN_SYN_2"/>
    <property type="match status" value="1"/>
</dbReference>
<proteinExistence type="inferred from homology"/>
<gene>
    <name evidence="1" type="primary">argG</name>
    <name type="ordered locus">VV1_1373</name>
</gene>
<evidence type="ECO:0000255" key="1">
    <source>
        <dbReference type="HAMAP-Rule" id="MF_00005"/>
    </source>
</evidence>
<name>ASSY_VIBVU</name>
<sequence>MSKLNVNKVVVAYSGGLDTSVIIPWLKENYDCEVVAFVADVGQGEEELVGIEEKAKASGASECYVVDLKEELVADYIYPTLKTGAYYEGKYLLGTSMARPVIAKAQVEIARKVGADALCHGCTGKGNDQVRFEGAFAALAPDLKVIAPWREWDLVSREQCLDYLAERNIPCAASLTKIYSRDANAWHISTEGGVLESTWNAPNEDCWVWTVDPEQAPNEAEYVTLQVEKGEVVAVDGEQMTPYNALVYLNEKGAKHGVGRIDIVENRLVGMKSRGCYETPGGTIMMEALRAVEQLVLDKTSFEFREELGLKASHLVYDGRWFTPLRKSIMAAADELAQDVNGEVVVKLYKGMATVTQKRSENSLYSEAFATFGEDEVYDQSHAGGFIRLYSLSSRIRALNSQK</sequence>
<protein>
    <recommendedName>
        <fullName evidence="1">Argininosuccinate synthase</fullName>
        <ecNumber evidence="1">6.3.4.5</ecNumber>
    </recommendedName>
    <alternativeName>
        <fullName evidence="1">Citrulline--aspartate ligase</fullName>
    </alternativeName>
</protein>
<keyword id="KW-0028">Amino-acid biosynthesis</keyword>
<keyword id="KW-0055">Arginine biosynthesis</keyword>
<keyword id="KW-0067">ATP-binding</keyword>
<keyword id="KW-0963">Cytoplasm</keyword>
<keyword id="KW-0436">Ligase</keyword>
<keyword id="KW-0547">Nucleotide-binding</keyword>
<accession>Q8DCN0</accession>
<feature type="chain" id="PRO_0000148663" description="Argininosuccinate synthase">
    <location>
        <begin position="1"/>
        <end position="403"/>
    </location>
</feature>
<feature type="binding site" evidence="1">
    <location>
        <begin position="12"/>
        <end position="20"/>
    </location>
    <ligand>
        <name>ATP</name>
        <dbReference type="ChEBI" id="CHEBI:30616"/>
    </ligand>
</feature>
<feature type="binding site" evidence="1">
    <location>
        <position position="39"/>
    </location>
    <ligand>
        <name>ATP</name>
        <dbReference type="ChEBI" id="CHEBI:30616"/>
    </ligand>
</feature>
<feature type="binding site" evidence="1">
    <location>
        <position position="91"/>
    </location>
    <ligand>
        <name>L-citrulline</name>
        <dbReference type="ChEBI" id="CHEBI:57743"/>
    </ligand>
</feature>
<feature type="binding site" evidence="1">
    <location>
        <position position="96"/>
    </location>
    <ligand>
        <name>L-citrulline</name>
        <dbReference type="ChEBI" id="CHEBI:57743"/>
    </ligand>
</feature>
<feature type="binding site" evidence="1">
    <location>
        <position position="121"/>
    </location>
    <ligand>
        <name>ATP</name>
        <dbReference type="ChEBI" id="CHEBI:30616"/>
    </ligand>
</feature>
<feature type="binding site" evidence="1">
    <location>
        <position position="123"/>
    </location>
    <ligand>
        <name>L-aspartate</name>
        <dbReference type="ChEBI" id="CHEBI:29991"/>
    </ligand>
</feature>
<feature type="binding site" evidence="1">
    <location>
        <position position="127"/>
    </location>
    <ligand>
        <name>L-aspartate</name>
        <dbReference type="ChEBI" id="CHEBI:29991"/>
    </ligand>
</feature>
<feature type="binding site" evidence="1">
    <location>
        <position position="127"/>
    </location>
    <ligand>
        <name>L-citrulline</name>
        <dbReference type="ChEBI" id="CHEBI:57743"/>
    </ligand>
</feature>
<feature type="binding site" evidence="1">
    <location>
        <position position="128"/>
    </location>
    <ligand>
        <name>L-aspartate</name>
        <dbReference type="ChEBI" id="CHEBI:29991"/>
    </ligand>
</feature>
<feature type="binding site" evidence="1">
    <location>
        <position position="131"/>
    </location>
    <ligand>
        <name>L-citrulline</name>
        <dbReference type="ChEBI" id="CHEBI:57743"/>
    </ligand>
</feature>
<feature type="binding site" evidence="1">
    <location>
        <position position="180"/>
    </location>
    <ligand>
        <name>L-citrulline</name>
        <dbReference type="ChEBI" id="CHEBI:57743"/>
    </ligand>
</feature>
<feature type="binding site" evidence="1">
    <location>
        <position position="189"/>
    </location>
    <ligand>
        <name>L-citrulline</name>
        <dbReference type="ChEBI" id="CHEBI:57743"/>
    </ligand>
</feature>
<feature type="binding site" evidence="1">
    <location>
        <position position="265"/>
    </location>
    <ligand>
        <name>L-citrulline</name>
        <dbReference type="ChEBI" id="CHEBI:57743"/>
    </ligand>
</feature>
<feature type="binding site" evidence="1">
    <location>
        <position position="277"/>
    </location>
    <ligand>
        <name>L-citrulline</name>
        <dbReference type="ChEBI" id="CHEBI:57743"/>
    </ligand>
</feature>
<comment type="catalytic activity">
    <reaction evidence="1">
        <text>L-citrulline + L-aspartate + ATP = 2-(N(omega)-L-arginino)succinate + AMP + diphosphate + H(+)</text>
        <dbReference type="Rhea" id="RHEA:10932"/>
        <dbReference type="ChEBI" id="CHEBI:15378"/>
        <dbReference type="ChEBI" id="CHEBI:29991"/>
        <dbReference type="ChEBI" id="CHEBI:30616"/>
        <dbReference type="ChEBI" id="CHEBI:33019"/>
        <dbReference type="ChEBI" id="CHEBI:57472"/>
        <dbReference type="ChEBI" id="CHEBI:57743"/>
        <dbReference type="ChEBI" id="CHEBI:456215"/>
        <dbReference type="EC" id="6.3.4.5"/>
    </reaction>
</comment>
<comment type="pathway">
    <text evidence="1">Amino-acid biosynthesis; L-arginine biosynthesis; L-arginine from L-ornithine and carbamoyl phosphate: step 2/3.</text>
</comment>
<comment type="subunit">
    <text evidence="1">Homotetramer.</text>
</comment>
<comment type="subcellular location">
    <subcellularLocation>
        <location evidence="1">Cytoplasm</location>
    </subcellularLocation>
</comment>
<comment type="similarity">
    <text evidence="1">Belongs to the argininosuccinate synthase family. Type 1 subfamily.</text>
</comment>
<reference key="1">
    <citation type="submission" date="2002-12" db="EMBL/GenBank/DDBJ databases">
        <title>Complete genome sequence of Vibrio vulnificus CMCP6.</title>
        <authorList>
            <person name="Rhee J.H."/>
            <person name="Kim S.Y."/>
            <person name="Chung S.S."/>
            <person name="Kim J.J."/>
            <person name="Moon Y.H."/>
            <person name="Jeong H."/>
            <person name="Choy H.E."/>
        </authorList>
    </citation>
    <scope>NUCLEOTIDE SEQUENCE [LARGE SCALE GENOMIC DNA]</scope>
    <source>
        <strain>CMCP6</strain>
    </source>
</reference>